<keyword id="KW-0320">Glycogen biosynthesis</keyword>
<keyword id="KW-0328">Glycosyltransferase</keyword>
<keyword id="KW-0808">Transferase</keyword>
<accession>Q0SZN5</accession>
<protein>
    <recommendedName>
        <fullName evidence="1">Glycogen synthase</fullName>
        <ecNumber evidence="1">2.4.1.21</ecNumber>
    </recommendedName>
    <alternativeName>
        <fullName evidence="1">Starch [bacterial glycogen] synthase</fullName>
    </alternativeName>
</protein>
<name>GLGA_SHIF8</name>
<reference key="1">
    <citation type="journal article" date="2006" name="BMC Genomics">
        <title>Complete genome sequence of Shigella flexneri 5b and comparison with Shigella flexneri 2a.</title>
        <authorList>
            <person name="Nie H."/>
            <person name="Yang F."/>
            <person name="Zhang X."/>
            <person name="Yang J."/>
            <person name="Chen L."/>
            <person name="Wang J."/>
            <person name="Xiong Z."/>
            <person name="Peng J."/>
            <person name="Sun L."/>
            <person name="Dong J."/>
            <person name="Xue Y."/>
            <person name="Xu X."/>
            <person name="Chen S."/>
            <person name="Yao Z."/>
            <person name="Shen Y."/>
            <person name="Jin Q."/>
        </authorList>
    </citation>
    <scope>NUCLEOTIDE SEQUENCE [LARGE SCALE GENOMIC DNA]</scope>
    <source>
        <strain>8401</strain>
    </source>
</reference>
<comment type="function">
    <text evidence="1">Synthesizes alpha-1,4-glucan chains using ADP-glucose.</text>
</comment>
<comment type="catalytic activity">
    <reaction evidence="1">
        <text>[(1-&gt;4)-alpha-D-glucosyl](n) + ADP-alpha-D-glucose = [(1-&gt;4)-alpha-D-glucosyl](n+1) + ADP + H(+)</text>
        <dbReference type="Rhea" id="RHEA:18189"/>
        <dbReference type="Rhea" id="RHEA-COMP:9584"/>
        <dbReference type="Rhea" id="RHEA-COMP:9587"/>
        <dbReference type="ChEBI" id="CHEBI:15378"/>
        <dbReference type="ChEBI" id="CHEBI:15444"/>
        <dbReference type="ChEBI" id="CHEBI:57498"/>
        <dbReference type="ChEBI" id="CHEBI:456216"/>
        <dbReference type="EC" id="2.4.1.21"/>
    </reaction>
</comment>
<comment type="pathway">
    <text evidence="1">Glycan biosynthesis; glycogen biosynthesis.</text>
</comment>
<comment type="similarity">
    <text evidence="1">Belongs to the glycosyltransferase 1 family. Bacterial/plant glycogen synthase subfamily.</text>
</comment>
<evidence type="ECO:0000255" key="1">
    <source>
        <dbReference type="HAMAP-Rule" id="MF_00484"/>
    </source>
</evidence>
<sequence>MQVLHVCSEMFPLLKTGGLADVIGALPAAQIADGVDARVLLPAFPDIRRGVTDAQVVSRRDTFAGHITLLFGHYNGVGIYLIDAPHLYDRPGSPYHDTNLFAYTDNVLRFALLGWVGAEMASGLDPFWRPDVVHAHDWHAGLAPAYLAARGRPAKSVFTVHNLAYQGMFYAHHMNDIQLPWSFFNIHGLEFNGQISFLKAGLYYADHITAVSPTYAREITEPQFAYGMEGLLQQRHREGRLSGVLNGVDEKIWSPETDLLLASRYTRDTLEDKAENKSQLQIAMGLKVDDKVPLFAVVSRLTSQKGLDLVLEALPGLLEQGGQLALLGAGDPVLQEGFLAAAAEYPGQVGVQIGYHEAFSHRIMGGADVILVPSRFEPCGLTQLYGLKYGTLPLVRRTGGLADTVSDCSLENLADGVASGFVFEDSNAWSLLRAIRRAFVLWSRPSLWRFVQRQAMAMDFSWQVAAKSYRELYYRLK</sequence>
<proteinExistence type="inferred from homology"/>
<dbReference type="EC" id="2.4.1.21" evidence="1"/>
<dbReference type="EMBL" id="CP000266">
    <property type="protein sequence ID" value="ABF05480.1"/>
    <property type="molecule type" value="Genomic_DNA"/>
</dbReference>
<dbReference type="RefSeq" id="WP_001197649.1">
    <property type="nucleotide sequence ID" value="NC_008258.1"/>
</dbReference>
<dbReference type="SMR" id="Q0SZN5"/>
<dbReference type="CAZy" id="GT5">
    <property type="family name" value="Glycosyltransferase Family 5"/>
</dbReference>
<dbReference type="KEGG" id="sfv:SFV_3438"/>
<dbReference type="HOGENOM" id="CLU_009583_18_2_6"/>
<dbReference type="UniPathway" id="UPA00164"/>
<dbReference type="Proteomes" id="UP000000659">
    <property type="component" value="Chromosome"/>
</dbReference>
<dbReference type="GO" id="GO:0005829">
    <property type="term" value="C:cytosol"/>
    <property type="evidence" value="ECO:0007669"/>
    <property type="project" value="TreeGrafter"/>
</dbReference>
<dbReference type="GO" id="GO:0009011">
    <property type="term" value="F:alpha-1,4-glucan glucosyltransferase (ADP-glucose donor) activity"/>
    <property type="evidence" value="ECO:0007669"/>
    <property type="project" value="UniProtKB-UniRule"/>
</dbReference>
<dbReference type="GO" id="GO:0004373">
    <property type="term" value="F:alpha-1,4-glucan glucosyltransferase (UDP-glucose donor) activity"/>
    <property type="evidence" value="ECO:0007669"/>
    <property type="project" value="InterPro"/>
</dbReference>
<dbReference type="GO" id="GO:0005978">
    <property type="term" value="P:glycogen biosynthetic process"/>
    <property type="evidence" value="ECO:0007669"/>
    <property type="project" value="UniProtKB-UniRule"/>
</dbReference>
<dbReference type="CDD" id="cd03791">
    <property type="entry name" value="GT5_Glycogen_synthase_DULL1-like"/>
    <property type="match status" value="1"/>
</dbReference>
<dbReference type="FunFam" id="3.40.50.2000:FF:000008">
    <property type="entry name" value="Glycogen synthase"/>
    <property type="match status" value="1"/>
</dbReference>
<dbReference type="FunFam" id="3.40.50.2000:FF:000011">
    <property type="entry name" value="Glycogen synthase"/>
    <property type="match status" value="1"/>
</dbReference>
<dbReference type="Gene3D" id="3.40.50.2000">
    <property type="entry name" value="Glycogen Phosphorylase B"/>
    <property type="match status" value="2"/>
</dbReference>
<dbReference type="HAMAP" id="MF_00484">
    <property type="entry name" value="Glycogen_synth"/>
    <property type="match status" value="1"/>
</dbReference>
<dbReference type="InterPro" id="IPR001296">
    <property type="entry name" value="Glyco_trans_1"/>
</dbReference>
<dbReference type="InterPro" id="IPR011835">
    <property type="entry name" value="GS/SS"/>
</dbReference>
<dbReference type="InterPro" id="IPR013534">
    <property type="entry name" value="Starch_synth_cat_dom"/>
</dbReference>
<dbReference type="NCBIfam" id="TIGR02095">
    <property type="entry name" value="glgA"/>
    <property type="match status" value="1"/>
</dbReference>
<dbReference type="NCBIfam" id="NF001899">
    <property type="entry name" value="PRK00654.1-2"/>
    <property type="match status" value="1"/>
</dbReference>
<dbReference type="PANTHER" id="PTHR45825:SF11">
    <property type="entry name" value="ALPHA AMYLASE DOMAIN-CONTAINING PROTEIN"/>
    <property type="match status" value="1"/>
</dbReference>
<dbReference type="PANTHER" id="PTHR45825">
    <property type="entry name" value="GRANULE-BOUND STARCH SYNTHASE 1, CHLOROPLASTIC/AMYLOPLASTIC"/>
    <property type="match status" value="1"/>
</dbReference>
<dbReference type="Pfam" id="PF08323">
    <property type="entry name" value="Glyco_transf_5"/>
    <property type="match status" value="1"/>
</dbReference>
<dbReference type="Pfam" id="PF00534">
    <property type="entry name" value="Glycos_transf_1"/>
    <property type="match status" value="1"/>
</dbReference>
<dbReference type="SUPFAM" id="SSF53756">
    <property type="entry name" value="UDP-Glycosyltransferase/glycogen phosphorylase"/>
    <property type="match status" value="1"/>
</dbReference>
<gene>
    <name evidence="1" type="primary">glgA</name>
    <name type="ordered locus">SFV_3438</name>
</gene>
<feature type="chain" id="PRO_1000014383" description="Glycogen synthase">
    <location>
        <begin position="1"/>
        <end position="477"/>
    </location>
</feature>
<feature type="binding site" evidence="1">
    <location>
        <position position="15"/>
    </location>
    <ligand>
        <name>ADP-alpha-D-glucose</name>
        <dbReference type="ChEBI" id="CHEBI:57498"/>
    </ligand>
</feature>
<organism>
    <name type="scientific">Shigella flexneri serotype 5b (strain 8401)</name>
    <dbReference type="NCBI Taxonomy" id="373384"/>
    <lineage>
        <taxon>Bacteria</taxon>
        <taxon>Pseudomonadati</taxon>
        <taxon>Pseudomonadota</taxon>
        <taxon>Gammaproteobacteria</taxon>
        <taxon>Enterobacterales</taxon>
        <taxon>Enterobacteriaceae</taxon>
        <taxon>Shigella</taxon>
    </lineage>
</organism>